<dbReference type="EMBL" id="AY116651">
    <property type="protein sequence ID" value="AAN07059.1"/>
    <property type="molecule type" value="Genomic_DNA"/>
</dbReference>
<dbReference type="RefSeq" id="YP_009240145.1">
    <property type="nucleotide sequence ID" value="NC_029734.1"/>
</dbReference>
<dbReference type="SMR" id="Q6YLT7"/>
<dbReference type="GeneID" id="27109671"/>
<dbReference type="GO" id="GO:0009535">
    <property type="term" value="C:chloroplast thylakoid membrane"/>
    <property type="evidence" value="ECO:0007669"/>
    <property type="project" value="UniProtKB-SubCell"/>
</dbReference>
<dbReference type="GO" id="GO:0015979">
    <property type="term" value="P:photosynthesis"/>
    <property type="evidence" value="ECO:0007669"/>
    <property type="project" value="InterPro"/>
</dbReference>
<dbReference type="HAMAP" id="MF_00293">
    <property type="entry name" value="PSII_PsbN"/>
    <property type="match status" value="1"/>
</dbReference>
<dbReference type="InterPro" id="IPR003398">
    <property type="entry name" value="PSII_PsbN"/>
</dbReference>
<dbReference type="PANTHER" id="PTHR35326">
    <property type="entry name" value="PROTEIN PSBN"/>
    <property type="match status" value="1"/>
</dbReference>
<dbReference type="PANTHER" id="PTHR35326:SF3">
    <property type="entry name" value="PROTEIN PSBN"/>
    <property type="match status" value="1"/>
</dbReference>
<dbReference type="Pfam" id="PF02468">
    <property type="entry name" value="PsbN"/>
    <property type="match status" value="1"/>
</dbReference>
<geneLocation type="chloroplast"/>
<sequence>METATLVAISISRLLVSFTGYALYTAFGQPSEQLRDPFEEHED</sequence>
<accession>Q6YLT7</accession>
<gene>
    <name evidence="1" type="primary">psbN</name>
</gene>
<evidence type="ECO:0000255" key="1">
    <source>
        <dbReference type="HAMAP-Rule" id="MF_00293"/>
    </source>
</evidence>
<name>PSBN_SCIVE</name>
<comment type="function">
    <text evidence="1">May play a role in photosystem I and II biogenesis.</text>
</comment>
<comment type="subcellular location">
    <subcellularLocation>
        <location evidence="1">Plastid</location>
        <location evidence="1">Chloroplast thylakoid membrane</location>
        <topology evidence="1">Single-pass membrane protein</topology>
    </subcellularLocation>
</comment>
<comment type="similarity">
    <text evidence="1">Belongs to the PsbN family.</text>
</comment>
<comment type="caution">
    <text evidence="1">Originally thought to be a component of PSII; based on experiments in Synechocystis, N.tabacum and barley, and its absence from PSII in T.elongatus and T.vulcanus, this is probably not true.</text>
</comment>
<organism>
    <name type="scientific">Sciadopitys verticillata</name>
    <name type="common">Japanese umbrella-pine</name>
    <name type="synonym">Taxus verticillata</name>
    <dbReference type="NCBI Taxonomy" id="28979"/>
    <lineage>
        <taxon>Eukaryota</taxon>
        <taxon>Viridiplantae</taxon>
        <taxon>Streptophyta</taxon>
        <taxon>Embryophyta</taxon>
        <taxon>Tracheophyta</taxon>
        <taxon>Spermatophyta</taxon>
        <taxon>Pinopsida</taxon>
        <taxon>Pinidae</taxon>
        <taxon>Conifers II</taxon>
        <taxon>Cupressales</taxon>
        <taxon>Sciadopityaceae</taxon>
        <taxon>Sciadopitys</taxon>
    </lineage>
</organism>
<keyword id="KW-0150">Chloroplast</keyword>
<keyword id="KW-0472">Membrane</keyword>
<keyword id="KW-0934">Plastid</keyword>
<keyword id="KW-0793">Thylakoid</keyword>
<keyword id="KW-0812">Transmembrane</keyword>
<keyword id="KW-1133">Transmembrane helix</keyword>
<reference key="1">
    <citation type="journal article" date="2003" name="Mol. Phylogenet. Evol.">
        <title>Inference of higher-order relationships in the cycads from a large chloroplast data set.</title>
        <authorList>
            <person name="Rai H.S."/>
            <person name="O'Brien H.E."/>
            <person name="Reeves P.A."/>
            <person name="Olmstead R.G."/>
            <person name="Graham S.W."/>
        </authorList>
    </citation>
    <scope>NUCLEOTIDE SEQUENCE [GENOMIC DNA]</scope>
</reference>
<protein>
    <recommendedName>
        <fullName evidence="1">Protein PsbN</fullName>
    </recommendedName>
</protein>
<feature type="chain" id="PRO_0000207953" description="Protein PsbN">
    <location>
        <begin position="1"/>
        <end position="43"/>
    </location>
</feature>
<feature type="transmembrane region" description="Helical" evidence="1">
    <location>
        <begin position="5"/>
        <end position="27"/>
    </location>
</feature>
<proteinExistence type="inferred from homology"/>